<comment type="function">
    <text evidence="1">Catalyzes the initial step of the lipid cycle reactions in the biosynthesis of the cell wall peptidoglycan: transfers peptidoglycan precursor phospho-MurNAc-pentapeptide from UDP-MurNAc-pentapeptide onto the lipid carrier undecaprenyl phosphate, yielding undecaprenyl-pyrophosphoryl-MurNAc-pentapeptide, known as lipid I.</text>
</comment>
<comment type="catalytic activity">
    <reaction evidence="1">
        <text>UDP-N-acetyl-alpha-D-muramoyl-L-alanyl-gamma-D-glutamyl-meso-2,6-diaminopimeloyl-D-alanyl-D-alanine + di-trans,octa-cis-undecaprenyl phosphate = di-trans,octa-cis-undecaprenyl diphospho-N-acetyl-alpha-D-muramoyl-L-alanyl-D-glutamyl-meso-2,6-diaminopimeloyl-D-alanyl-D-alanine + UMP</text>
        <dbReference type="Rhea" id="RHEA:28386"/>
        <dbReference type="ChEBI" id="CHEBI:57865"/>
        <dbReference type="ChEBI" id="CHEBI:60392"/>
        <dbReference type="ChEBI" id="CHEBI:61386"/>
        <dbReference type="ChEBI" id="CHEBI:61387"/>
        <dbReference type="EC" id="2.7.8.13"/>
    </reaction>
</comment>
<comment type="cofactor">
    <cofactor evidence="1">
        <name>Mg(2+)</name>
        <dbReference type="ChEBI" id="CHEBI:18420"/>
    </cofactor>
</comment>
<comment type="pathway">
    <text evidence="1">Cell wall biogenesis; peptidoglycan biosynthesis.</text>
</comment>
<comment type="subcellular location">
    <subcellularLocation>
        <location evidence="1">Cell inner membrane</location>
        <topology evidence="1">Multi-pass membrane protein</topology>
    </subcellularLocation>
</comment>
<comment type="similarity">
    <text evidence="1">Belongs to the glycosyltransferase 4 family. MraY subfamily.</text>
</comment>
<reference key="1">
    <citation type="journal article" date="2006" name="Proc. Natl. Acad. Sci. U.S.A.">
        <title>Genome sequence of Synechococcus CC9311: insights into adaptation to a coastal environment.</title>
        <authorList>
            <person name="Palenik B."/>
            <person name="Ren Q."/>
            <person name="Dupont C.L."/>
            <person name="Myers G.S."/>
            <person name="Heidelberg J.F."/>
            <person name="Badger J.H."/>
            <person name="Madupu R."/>
            <person name="Nelson W.C."/>
            <person name="Brinkac L.M."/>
            <person name="Dodson R.J."/>
            <person name="Durkin A.S."/>
            <person name="Daugherty S.C."/>
            <person name="Sullivan S.A."/>
            <person name="Khouri H."/>
            <person name="Mohamoud Y."/>
            <person name="Halpin R."/>
            <person name="Paulsen I.T."/>
        </authorList>
    </citation>
    <scope>NUCLEOTIDE SEQUENCE [LARGE SCALE GENOMIC DNA]</scope>
    <source>
        <strain>CC9311</strain>
    </source>
</reference>
<keyword id="KW-0131">Cell cycle</keyword>
<keyword id="KW-0132">Cell division</keyword>
<keyword id="KW-0997">Cell inner membrane</keyword>
<keyword id="KW-1003">Cell membrane</keyword>
<keyword id="KW-0133">Cell shape</keyword>
<keyword id="KW-0961">Cell wall biogenesis/degradation</keyword>
<keyword id="KW-0460">Magnesium</keyword>
<keyword id="KW-0472">Membrane</keyword>
<keyword id="KW-0479">Metal-binding</keyword>
<keyword id="KW-0573">Peptidoglycan synthesis</keyword>
<keyword id="KW-1185">Reference proteome</keyword>
<keyword id="KW-0808">Transferase</keyword>
<keyword id="KW-0812">Transmembrane</keyword>
<keyword id="KW-1133">Transmembrane helix</keyword>
<evidence type="ECO:0000255" key="1">
    <source>
        <dbReference type="HAMAP-Rule" id="MF_00038"/>
    </source>
</evidence>
<organism>
    <name type="scientific">Synechococcus sp. (strain CC9311)</name>
    <dbReference type="NCBI Taxonomy" id="64471"/>
    <lineage>
        <taxon>Bacteria</taxon>
        <taxon>Bacillati</taxon>
        <taxon>Cyanobacteriota</taxon>
        <taxon>Cyanophyceae</taxon>
        <taxon>Synechococcales</taxon>
        <taxon>Synechococcaceae</taxon>
        <taxon>Synechococcus</taxon>
    </lineage>
</organism>
<name>MRAY_SYNS3</name>
<protein>
    <recommendedName>
        <fullName evidence="1">Phospho-N-acetylmuramoyl-pentapeptide-transferase</fullName>
        <ecNumber evidence="1">2.7.8.13</ecNumber>
    </recommendedName>
    <alternativeName>
        <fullName evidence="1">UDP-MurNAc-pentapeptide phosphotransferase</fullName>
    </alternativeName>
</protein>
<sequence length="370" mass="39295">MKERDVNDAQETPPPLEGKVSAGVLAVVVYAAAFASDRWIPNSLLSLPLLIATLIAAIVTWWGVPKLRGLKLGQVIREEGPQAHLTKSGTPTMGGLLVVPVGVIVGGLISWSGQAAEQLLAVAFITLAYMVVGGIDDWRSLTKHTNTGLTPRGKLLLQALAAVIFLIWAGMRGWISGDVALPFDINLPLNWLIWPLAVFVFLAESNATNLTDGLDGLAAGCGALVFTGMALQLTLRGNSGDPSLAGFCMAMAGCWIGFLVHNRNPAKVFMGDTGSLAMGGALTAVALLTNSLWPLLIMGGIFLAESLSVIIQVWVFKATKGADGIGRRVFRMSPLHHHFELGGTPEQLVVPGFWLATVFLVLIGIFFKPN</sequence>
<proteinExistence type="inferred from homology"/>
<accession>Q0I604</accession>
<gene>
    <name evidence="1" type="primary">mraY</name>
    <name type="ordered locus">sync_2931</name>
</gene>
<dbReference type="EC" id="2.7.8.13" evidence="1"/>
<dbReference type="EMBL" id="CP000435">
    <property type="protein sequence ID" value="ABI45041.1"/>
    <property type="molecule type" value="Genomic_DNA"/>
</dbReference>
<dbReference type="RefSeq" id="WP_011620817.1">
    <property type="nucleotide sequence ID" value="NC_008319.1"/>
</dbReference>
<dbReference type="SMR" id="Q0I604"/>
<dbReference type="STRING" id="64471.sync_2931"/>
<dbReference type="KEGG" id="syg:sync_2931"/>
<dbReference type="eggNOG" id="COG0472">
    <property type="taxonomic scope" value="Bacteria"/>
</dbReference>
<dbReference type="HOGENOM" id="CLU_023982_0_2_3"/>
<dbReference type="OrthoDB" id="9805475at2"/>
<dbReference type="UniPathway" id="UPA00219"/>
<dbReference type="Proteomes" id="UP000001961">
    <property type="component" value="Chromosome"/>
</dbReference>
<dbReference type="GO" id="GO:0005886">
    <property type="term" value="C:plasma membrane"/>
    <property type="evidence" value="ECO:0007669"/>
    <property type="project" value="UniProtKB-SubCell"/>
</dbReference>
<dbReference type="GO" id="GO:0046872">
    <property type="term" value="F:metal ion binding"/>
    <property type="evidence" value="ECO:0007669"/>
    <property type="project" value="UniProtKB-KW"/>
</dbReference>
<dbReference type="GO" id="GO:0008963">
    <property type="term" value="F:phospho-N-acetylmuramoyl-pentapeptide-transferase activity"/>
    <property type="evidence" value="ECO:0007669"/>
    <property type="project" value="UniProtKB-UniRule"/>
</dbReference>
<dbReference type="GO" id="GO:0051992">
    <property type="term" value="F:UDP-N-acetylmuramoyl-L-alanyl-D-glutamyl-meso-2,6-diaminopimelyl-D-alanyl-D-alanine:undecaprenyl-phosphate transferase activity"/>
    <property type="evidence" value="ECO:0007669"/>
    <property type="project" value="RHEA"/>
</dbReference>
<dbReference type="GO" id="GO:0051301">
    <property type="term" value="P:cell division"/>
    <property type="evidence" value="ECO:0007669"/>
    <property type="project" value="UniProtKB-KW"/>
</dbReference>
<dbReference type="GO" id="GO:0071555">
    <property type="term" value="P:cell wall organization"/>
    <property type="evidence" value="ECO:0007669"/>
    <property type="project" value="UniProtKB-KW"/>
</dbReference>
<dbReference type="GO" id="GO:0009252">
    <property type="term" value="P:peptidoglycan biosynthetic process"/>
    <property type="evidence" value="ECO:0007669"/>
    <property type="project" value="UniProtKB-UniRule"/>
</dbReference>
<dbReference type="GO" id="GO:0008360">
    <property type="term" value="P:regulation of cell shape"/>
    <property type="evidence" value="ECO:0007669"/>
    <property type="project" value="UniProtKB-KW"/>
</dbReference>
<dbReference type="CDD" id="cd06852">
    <property type="entry name" value="GT_MraY"/>
    <property type="match status" value="1"/>
</dbReference>
<dbReference type="HAMAP" id="MF_00038">
    <property type="entry name" value="MraY"/>
    <property type="match status" value="1"/>
</dbReference>
<dbReference type="InterPro" id="IPR000715">
    <property type="entry name" value="Glycosyl_transferase_4"/>
</dbReference>
<dbReference type="InterPro" id="IPR003524">
    <property type="entry name" value="PNAcMuramoyl-5peptid_Trfase"/>
</dbReference>
<dbReference type="InterPro" id="IPR018480">
    <property type="entry name" value="PNAcMuramoyl-5peptid_Trfase_CS"/>
</dbReference>
<dbReference type="NCBIfam" id="TIGR00445">
    <property type="entry name" value="mraY"/>
    <property type="match status" value="1"/>
</dbReference>
<dbReference type="PANTHER" id="PTHR22926">
    <property type="entry name" value="PHOSPHO-N-ACETYLMURAMOYL-PENTAPEPTIDE-TRANSFERASE"/>
    <property type="match status" value="1"/>
</dbReference>
<dbReference type="PANTHER" id="PTHR22926:SF5">
    <property type="entry name" value="PHOSPHO-N-ACETYLMURAMOYL-PENTAPEPTIDE-TRANSFERASE HOMOLOG"/>
    <property type="match status" value="1"/>
</dbReference>
<dbReference type="Pfam" id="PF00953">
    <property type="entry name" value="Glycos_transf_4"/>
    <property type="match status" value="1"/>
</dbReference>
<dbReference type="Pfam" id="PF10555">
    <property type="entry name" value="MraY_sig1"/>
    <property type="match status" value="1"/>
</dbReference>
<dbReference type="PROSITE" id="PS01347">
    <property type="entry name" value="MRAY_1"/>
    <property type="match status" value="1"/>
</dbReference>
<dbReference type="PROSITE" id="PS01348">
    <property type="entry name" value="MRAY_2"/>
    <property type="match status" value="1"/>
</dbReference>
<feature type="chain" id="PRO_0000332548" description="Phospho-N-acetylmuramoyl-pentapeptide-transferase">
    <location>
        <begin position="1"/>
        <end position="370"/>
    </location>
</feature>
<feature type="transmembrane region" description="Helical" evidence="1">
    <location>
        <begin position="15"/>
        <end position="35"/>
    </location>
</feature>
<feature type="transmembrane region" description="Helical" evidence="1">
    <location>
        <begin position="44"/>
        <end position="64"/>
    </location>
</feature>
<feature type="transmembrane region" description="Helical" evidence="1">
    <location>
        <begin position="93"/>
        <end position="113"/>
    </location>
</feature>
<feature type="transmembrane region" description="Helical" evidence="1">
    <location>
        <begin position="115"/>
        <end position="135"/>
    </location>
</feature>
<feature type="transmembrane region" description="Helical" evidence="1">
    <location>
        <begin position="155"/>
        <end position="175"/>
    </location>
</feature>
<feature type="transmembrane region" description="Helical" evidence="1">
    <location>
        <begin position="183"/>
        <end position="203"/>
    </location>
</feature>
<feature type="transmembrane region" description="Helical" evidence="1">
    <location>
        <begin position="213"/>
        <end position="233"/>
    </location>
</feature>
<feature type="transmembrane region" description="Helical" evidence="1">
    <location>
        <begin position="240"/>
        <end position="260"/>
    </location>
</feature>
<feature type="transmembrane region" description="Helical" evidence="1">
    <location>
        <begin position="268"/>
        <end position="288"/>
    </location>
</feature>
<feature type="transmembrane region" description="Helical" evidence="1">
    <location>
        <begin position="296"/>
        <end position="316"/>
    </location>
</feature>
<feature type="transmembrane region" description="Helical" evidence="1">
    <location>
        <begin position="347"/>
        <end position="367"/>
    </location>
</feature>